<organism>
    <name type="scientific">Fervidobacterium nodosum (strain ATCC 35602 / DSM 5306 / Rt17-B1)</name>
    <dbReference type="NCBI Taxonomy" id="381764"/>
    <lineage>
        <taxon>Bacteria</taxon>
        <taxon>Thermotogati</taxon>
        <taxon>Thermotogota</taxon>
        <taxon>Thermotogae</taxon>
        <taxon>Thermotogales</taxon>
        <taxon>Fervidobacteriaceae</taxon>
        <taxon>Fervidobacterium</taxon>
    </lineage>
</organism>
<protein>
    <recommendedName>
        <fullName evidence="1">CinA-like protein</fullName>
    </recommendedName>
</protein>
<proteinExistence type="inferred from homology"/>
<feature type="chain" id="PRO_1000071773" description="CinA-like protein">
    <location>
        <begin position="1"/>
        <end position="408"/>
    </location>
</feature>
<accession>A7HNE6</accession>
<sequence length="408" mass="44756">MKKAIILAIGNELVEGLIVDTNSKYLAQRLKEFGYYIVRTETLPDNFDIMVLRIKEAIKDADLIITSGGLGPTEDDLTREAVAHSIGRKLLKNEAIAQELINRAIKYYGKAPESVVKQAFVIENAEVIDNKVGTAPGQMLKYDGKIIILLPGPPVELIPMFESILEKLKTNDSLYTRRIKTIGIPEAVLMDEYKDILYSNSRITIATMASYERGVEVRFTGPIEIKDEIDYVVNTLLPKLGESVYALDDKEMHDVVYELLVKNNYTVSFAESCTGGLISSTFVDIPGVSSVFKGSVVAYSNEAKIEILGVSKETIEKFGAVSEECVIEMAQGAKKIFNSNFSVAVSGIAGPSGGSEKKPVGTVCIAVCSPNGINSATYNLRGDRQMIRKRSTLIAFDMLRRGIIKCQG</sequence>
<dbReference type="EMBL" id="CP000771">
    <property type="protein sequence ID" value="ABS61429.1"/>
    <property type="molecule type" value="Genomic_DNA"/>
</dbReference>
<dbReference type="RefSeq" id="WP_011994731.1">
    <property type="nucleotide sequence ID" value="NC_009718.1"/>
</dbReference>
<dbReference type="SMR" id="A7HNE6"/>
<dbReference type="STRING" id="381764.Fnod_1586"/>
<dbReference type="KEGG" id="fno:Fnod_1586"/>
<dbReference type="eggNOG" id="COG1058">
    <property type="taxonomic scope" value="Bacteria"/>
</dbReference>
<dbReference type="eggNOG" id="COG1546">
    <property type="taxonomic scope" value="Bacteria"/>
</dbReference>
<dbReference type="HOGENOM" id="CLU_030805_9_3_0"/>
<dbReference type="OrthoDB" id="9801454at2"/>
<dbReference type="Proteomes" id="UP000002415">
    <property type="component" value="Chromosome"/>
</dbReference>
<dbReference type="CDD" id="cd00885">
    <property type="entry name" value="cinA"/>
    <property type="match status" value="1"/>
</dbReference>
<dbReference type="Gene3D" id="3.30.70.2860">
    <property type="match status" value="1"/>
</dbReference>
<dbReference type="Gene3D" id="3.90.950.20">
    <property type="entry name" value="CinA-like"/>
    <property type="match status" value="1"/>
</dbReference>
<dbReference type="Gene3D" id="3.40.980.10">
    <property type="entry name" value="MoaB/Mog-like domain"/>
    <property type="match status" value="1"/>
</dbReference>
<dbReference type="HAMAP" id="MF_00226_B">
    <property type="entry name" value="CinA_B"/>
    <property type="match status" value="1"/>
</dbReference>
<dbReference type="InterPro" id="IPR050101">
    <property type="entry name" value="CinA"/>
</dbReference>
<dbReference type="InterPro" id="IPR036653">
    <property type="entry name" value="CinA-like_C"/>
</dbReference>
<dbReference type="InterPro" id="IPR008136">
    <property type="entry name" value="CinA_C"/>
</dbReference>
<dbReference type="InterPro" id="IPR008135">
    <property type="entry name" value="Competence-induced_CinA"/>
</dbReference>
<dbReference type="InterPro" id="IPR036425">
    <property type="entry name" value="MoaB/Mog-like_dom_sf"/>
</dbReference>
<dbReference type="InterPro" id="IPR001453">
    <property type="entry name" value="MoaB/Mog_dom"/>
</dbReference>
<dbReference type="NCBIfam" id="TIGR00200">
    <property type="entry name" value="cinA_nterm"/>
    <property type="match status" value="1"/>
</dbReference>
<dbReference type="NCBIfam" id="TIGR00177">
    <property type="entry name" value="molyb_syn"/>
    <property type="match status" value="1"/>
</dbReference>
<dbReference type="NCBIfam" id="TIGR00199">
    <property type="entry name" value="PncC_domain"/>
    <property type="match status" value="1"/>
</dbReference>
<dbReference type="NCBIfam" id="NF001813">
    <property type="entry name" value="PRK00549.1"/>
    <property type="match status" value="1"/>
</dbReference>
<dbReference type="PANTHER" id="PTHR13939">
    <property type="entry name" value="NICOTINAMIDE-NUCLEOTIDE AMIDOHYDROLASE PNCC"/>
    <property type="match status" value="1"/>
</dbReference>
<dbReference type="PANTHER" id="PTHR13939:SF0">
    <property type="entry name" value="NMN AMIDOHYDROLASE-LIKE PROTEIN YFAY"/>
    <property type="match status" value="1"/>
</dbReference>
<dbReference type="Pfam" id="PF02464">
    <property type="entry name" value="CinA"/>
    <property type="match status" value="1"/>
</dbReference>
<dbReference type="Pfam" id="PF00994">
    <property type="entry name" value="MoCF_biosynth"/>
    <property type="match status" value="1"/>
</dbReference>
<dbReference type="PIRSF" id="PIRSF006728">
    <property type="entry name" value="CinA"/>
    <property type="match status" value="1"/>
</dbReference>
<dbReference type="SMART" id="SM00852">
    <property type="entry name" value="MoCF_biosynth"/>
    <property type="match status" value="1"/>
</dbReference>
<dbReference type="SUPFAM" id="SSF142433">
    <property type="entry name" value="CinA-like"/>
    <property type="match status" value="1"/>
</dbReference>
<dbReference type="SUPFAM" id="SSF53218">
    <property type="entry name" value="Molybdenum cofactor biosynthesis proteins"/>
    <property type="match status" value="1"/>
</dbReference>
<keyword id="KW-1185">Reference proteome</keyword>
<comment type="similarity">
    <text evidence="1">Belongs to the CinA family.</text>
</comment>
<reference key="1">
    <citation type="submission" date="2007-07" db="EMBL/GenBank/DDBJ databases">
        <title>Complete sequence of Fervidobacterium nodosum Rt17-B1.</title>
        <authorList>
            <consortium name="US DOE Joint Genome Institute"/>
            <person name="Copeland A."/>
            <person name="Lucas S."/>
            <person name="Lapidus A."/>
            <person name="Barry K."/>
            <person name="Glavina del Rio T."/>
            <person name="Dalin E."/>
            <person name="Tice H."/>
            <person name="Pitluck S."/>
            <person name="Saunders E."/>
            <person name="Brettin T."/>
            <person name="Bruce D."/>
            <person name="Detter J.C."/>
            <person name="Han C."/>
            <person name="Schmutz J."/>
            <person name="Larimer F."/>
            <person name="Land M."/>
            <person name="Hauser L."/>
            <person name="Kyrpides N."/>
            <person name="Mikhailova N."/>
            <person name="Nelson K."/>
            <person name="Gogarten J.P."/>
            <person name="Noll K."/>
            <person name="Richardson P."/>
        </authorList>
    </citation>
    <scope>NUCLEOTIDE SEQUENCE [LARGE SCALE GENOMIC DNA]</scope>
    <source>
        <strain>ATCC 35602 / DSM 5306 / Rt17-B1</strain>
    </source>
</reference>
<name>CINAL_FERNB</name>
<gene>
    <name type="ordered locus">Fnod_1586</name>
</gene>
<evidence type="ECO:0000255" key="1">
    <source>
        <dbReference type="HAMAP-Rule" id="MF_00226"/>
    </source>
</evidence>